<name>GCSPB_BACLD</name>
<evidence type="ECO:0000255" key="1">
    <source>
        <dbReference type="HAMAP-Rule" id="MF_00713"/>
    </source>
</evidence>
<keyword id="KW-0560">Oxidoreductase</keyword>
<keyword id="KW-0663">Pyridoxal phosphate</keyword>
<keyword id="KW-1185">Reference proteome</keyword>
<dbReference type="EC" id="1.4.4.2" evidence="1"/>
<dbReference type="EMBL" id="CP000002">
    <property type="protein sequence ID" value="AAU24144.1"/>
    <property type="molecule type" value="Genomic_DNA"/>
</dbReference>
<dbReference type="EMBL" id="AE017333">
    <property type="protein sequence ID" value="AAU41503.1"/>
    <property type="molecule type" value="Genomic_DNA"/>
</dbReference>
<dbReference type="RefSeq" id="WP_003183434.1">
    <property type="nucleotide sequence ID" value="NC_006322.1"/>
</dbReference>
<dbReference type="SMR" id="Q65HG1"/>
<dbReference type="STRING" id="279010.BL01560"/>
<dbReference type="GeneID" id="92860776"/>
<dbReference type="KEGG" id="bld:BLi02629"/>
<dbReference type="KEGG" id="bli:BL01560"/>
<dbReference type="eggNOG" id="COG1003">
    <property type="taxonomic scope" value="Bacteria"/>
</dbReference>
<dbReference type="HOGENOM" id="CLU_004620_5_0_9"/>
<dbReference type="Proteomes" id="UP000000606">
    <property type="component" value="Chromosome"/>
</dbReference>
<dbReference type="GO" id="GO:0005829">
    <property type="term" value="C:cytosol"/>
    <property type="evidence" value="ECO:0007669"/>
    <property type="project" value="TreeGrafter"/>
</dbReference>
<dbReference type="GO" id="GO:0005960">
    <property type="term" value="C:glycine cleavage complex"/>
    <property type="evidence" value="ECO:0007669"/>
    <property type="project" value="TreeGrafter"/>
</dbReference>
<dbReference type="GO" id="GO:0016594">
    <property type="term" value="F:glycine binding"/>
    <property type="evidence" value="ECO:0007669"/>
    <property type="project" value="TreeGrafter"/>
</dbReference>
<dbReference type="GO" id="GO:0004375">
    <property type="term" value="F:glycine dehydrogenase (decarboxylating) activity"/>
    <property type="evidence" value="ECO:0007669"/>
    <property type="project" value="UniProtKB-EC"/>
</dbReference>
<dbReference type="GO" id="GO:0030170">
    <property type="term" value="F:pyridoxal phosphate binding"/>
    <property type="evidence" value="ECO:0007669"/>
    <property type="project" value="TreeGrafter"/>
</dbReference>
<dbReference type="GO" id="GO:0019464">
    <property type="term" value="P:glycine decarboxylation via glycine cleavage system"/>
    <property type="evidence" value="ECO:0007669"/>
    <property type="project" value="UniProtKB-UniRule"/>
</dbReference>
<dbReference type="CDD" id="cd00613">
    <property type="entry name" value="GDC-P"/>
    <property type="match status" value="1"/>
</dbReference>
<dbReference type="FunFam" id="3.40.640.10:FF:000034">
    <property type="entry name" value="Probable glycine dehydrogenase (decarboxylating) subunit 2"/>
    <property type="match status" value="1"/>
</dbReference>
<dbReference type="FunFam" id="3.90.1150.10:FF:000014">
    <property type="entry name" value="Probable glycine dehydrogenase (decarboxylating) subunit 2"/>
    <property type="match status" value="1"/>
</dbReference>
<dbReference type="Gene3D" id="6.20.440.10">
    <property type="match status" value="1"/>
</dbReference>
<dbReference type="Gene3D" id="3.90.1150.10">
    <property type="entry name" value="Aspartate Aminotransferase, domain 1"/>
    <property type="match status" value="1"/>
</dbReference>
<dbReference type="Gene3D" id="3.40.640.10">
    <property type="entry name" value="Type I PLP-dependent aspartate aminotransferase-like (Major domain)"/>
    <property type="match status" value="1"/>
</dbReference>
<dbReference type="HAMAP" id="MF_00713">
    <property type="entry name" value="GcvPB"/>
    <property type="match status" value="1"/>
</dbReference>
<dbReference type="InterPro" id="IPR023012">
    <property type="entry name" value="GcvPB"/>
</dbReference>
<dbReference type="InterPro" id="IPR049316">
    <property type="entry name" value="GDC-P_C"/>
</dbReference>
<dbReference type="InterPro" id="IPR049315">
    <property type="entry name" value="GDC-P_N"/>
</dbReference>
<dbReference type="InterPro" id="IPR020581">
    <property type="entry name" value="GDC_P"/>
</dbReference>
<dbReference type="InterPro" id="IPR015424">
    <property type="entry name" value="PyrdxlP-dep_Trfase"/>
</dbReference>
<dbReference type="InterPro" id="IPR015421">
    <property type="entry name" value="PyrdxlP-dep_Trfase_major"/>
</dbReference>
<dbReference type="InterPro" id="IPR015422">
    <property type="entry name" value="PyrdxlP-dep_Trfase_small"/>
</dbReference>
<dbReference type="NCBIfam" id="NF003346">
    <property type="entry name" value="PRK04366.1"/>
    <property type="match status" value="1"/>
</dbReference>
<dbReference type="PANTHER" id="PTHR11773:SF1">
    <property type="entry name" value="GLYCINE DEHYDROGENASE (DECARBOXYLATING), MITOCHONDRIAL"/>
    <property type="match status" value="1"/>
</dbReference>
<dbReference type="PANTHER" id="PTHR11773">
    <property type="entry name" value="GLYCINE DEHYDROGENASE, DECARBOXYLATING"/>
    <property type="match status" value="1"/>
</dbReference>
<dbReference type="Pfam" id="PF21478">
    <property type="entry name" value="GcvP2_C"/>
    <property type="match status" value="1"/>
</dbReference>
<dbReference type="Pfam" id="PF02347">
    <property type="entry name" value="GDC-P"/>
    <property type="match status" value="1"/>
</dbReference>
<dbReference type="SUPFAM" id="SSF53383">
    <property type="entry name" value="PLP-dependent transferases"/>
    <property type="match status" value="1"/>
</dbReference>
<proteinExistence type="inferred from homology"/>
<gene>
    <name evidence="1" type="primary">gcvPB</name>
    <name type="ordered locus">BLi02629</name>
    <name type="ordered locus">BL01560</name>
</gene>
<reference key="1">
    <citation type="journal article" date="2004" name="J. Mol. Microbiol. Biotechnol.">
        <title>The complete genome sequence of Bacillus licheniformis DSM13, an organism with great industrial potential.</title>
        <authorList>
            <person name="Veith B."/>
            <person name="Herzberg C."/>
            <person name="Steckel S."/>
            <person name="Feesche J."/>
            <person name="Maurer K.H."/>
            <person name="Ehrenreich P."/>
            <person name="Baeumer S."/>
            <person name="Henne A."/>
            <person name="Liesegang H."/>
            <person name="Merkl R."/>
            <person name="Ehrenreich A."/>
            <person name="Gottschalk G."/>
        </authorList>
    </citation>
    <scope>NUCLEOTIDE SEQUENCE [LARGE SCALE GENOMIC DNA]</scope>
    <source>
        <strain>ATCC 14580 / DSM 13 / JCM 2505 / CCUG 7422 / NBRC 12200 / NCIMB 9375 / NCTC 10341 / NRRL NRS-1264 / Gibson 46</strain>
    </source>
</reference>
<reference key="2">
    <citation type="journal article" date="2004" name="Genome Biol.">
        <title>Complete genome sequence of the industrial bacterium Bacillus licheniformis and comparisons with closely related Bacillus species.</title>
        <authorList>
            <person name="Rey M.W."/>
            <person name="Ramaiya P."/>
            <person name="Nelson B.A."/>
            <person name="Brody-Karpin S.D."/>
            <person name="Zaretsky E.J."/>
            <person name="Tang M."/>
            <person name="Lopez de Leon A."/>
            <person name="Xiang H."/>
            <person name="Gusti V."/>
            <person name="Clausen I.G."/>
            <person name="Olsen P.B."/>
            <person name="Rasmussen M.D."/>
            <person name="Andersen J.T."/>
            <person name="Joergensen P.L."/>
            <person name="Larsen T.S."/>
            <person name="Sorokin A."/>
            <person name="Bolotin A."/>
            <person name="Lapidus A."/>
            <person name="Galleron N."/>
            <person name="Ehrlich S.D."/>
            <person name="Berka R.M."/>
        </authorList>
    </citation>
    <scope>NUCLEOTIDE SEQUENCE [LARGE SCALE GENOMIC DNA]</scope>
    <source>
        <strain>ATCC 14580 / DSM 13 / JCM 2505 / CCUG 7422 / NBRC 12200 / NCIMB 9375 / NCTC 10341 / NRRL NRS-1264 / Gibson 46</strain>
    </source>
</reference>
<accession>Q65HG1</accession>
<accession>Q62SW5</accession>
<comment type="function">
    <text evidence="1">The glycine cleavage system catalyzes the degradation of glycine. The P protein binds the alpha-amino group of glycine through its pyridoxal phosphate cofactor; CO(2) is released and the remaining methylamine moiety is then transferred to the lipoamide cofactor of the H protein.</text>
</comment>
<comment type="catalytic activity">
    <reaction evidence="1">
        <text>N(6)-[(R)-lipoyl]-L-lysyl-[glycine-cleavage complex H protein] + glycine + H(+) = N(6)-[(R)-S(8)-aminomethyldihydrolipoyl]-L-lysyl-[glycine-cleavage complex H protein] + CO2</text>
        <dbReference type="Rhea" id="RHEA:24304"/>
        <dbReference type="Rhea" id="RHEA-COMP:10494"/>
        <dbReference type="Rhea" id="RHEA-COMP:10495"/>
        <dbReference type="ChEBI" id="CHEBI:15378"/>
        <dbReference type="ChEBI" id="CHEBI:16526"/>
        <dbReference type="ChEBI" id="CHEBI:57305"/>
        <dbReference type="ChEBI" id="CHEBI:83099"/>
        <dbReference type="ChEBI" id="CHEBI:83143"/>
        <dbReference type="EC" id="1.4.4.2"/>
    </reaction>
</comment>
<comment type="cofactor">
    <cofactor evidence="1">
        <name>pyridoxal 5'-phosphate</name>
        <dbReference type="ChEBI" id="CHEBI:597326"/>
    </cofactor>
</comment>
<comment type="subunit">
    <text evidence="1">The glycine cleavage system is composed of four proteins: P, T, L and H. In this organism, the P 'protein' is a heterodimer of two subunits.</text>
</comment>
<comment type="similarity">
    <text evidence="1">Belongs to the GcvP family. C-terminal subunit subfamily.</text>
</comment>
<protein>
    <recommendedName>
        <fullName evidence="1">Probable glycine dehydrogenase (decarboxylating) subunit 2</fullName>
        <ecNumber evidence="1">1.4.4.2</ecNumber>
    </recommendedName>
    <alternativeName>
        <fullName evidence="1">Glycine cleavage system P-protein subunit 2</fullName>
    </alternativeName>
    <alternativeName>
        <fullName evidence="1">Glycine decarboxylase subunit 2</fullName>
    </alternativeName>
    <alternativeName>
        <fullName evidence="1">Glycine dehydrogenase (aminomethyl-transferring) subunit 2</fullName>
    </alternativeName>
</protein>
<sequence length="485" mass="54016">MNNQDQSLIFEVSKEGRVGYSLPELDVPETDVTDVIDEAYIRDEPADLPEVSELDIMRHYTALSRRNHGVDSGFYPLGSCTMKYNPKINEKIARIPGFSAIHPLQDEATVQGALELLYDLSEHLEEITGMDEVTLQPAAGAHGEWTGLMMIRAFHEANGDHKRTKVIVPDSAHGTNPASATVAGFETVTVKSNDDGLVDLEDLKRVVDEETAALMLTNPNTLGLFEENILEMAEIVHSAGGKLYYDGANLNAVLSKARPGDMGFDVVHLNLHKTFTGPHGGGGPGSGPVGVKKELIPYLPKPVLVKKDGRYTFDHDRPHSIGRVKPYYGNFGINVRAYTYIRSMGPDGLKEVTENAVLNANYMMRKLAPYYDLPFDRHSKHEFVLSGRRQKKLGVRTLDIAKRLLDFGFHPPTIYFPLNVEECIMIEPTETESKETLDAFIDTMIQIAKEAEETPEVVQEAPHTTVVKRMDETKAARKPVLRYEK</sequence>
<feature type="chain" id="PRO_1000045688" description="Probable glycine dehydrogenase (decarboxylating) subunit 2">
    <location>
        <begin position="1"/>
        <end position="485"/>
    </location>
</feature>
<feature type="modified residue" description="N6-(pyridoxal phosphate)lysine" evidence="1">
    <location>
        <position position="273"/>
    </location>
</feature>
<organism>
    <name type="scientific">Bacillus licheniformis (strain ATCC 14580 / DSM 13 / JCM 2505 / CCUG 7422 / NBRC 12200 / NCIMB 9375 / NCTC 10341 / NRRL NRS-1264 / Gibson 46)</name>
    <dbReference type="NCBI Taxonomy" id="279010"/>
    <lineage>
        <taxon>Bacteria</taxon>
        <taxon>Bacillati</taxon>
        <taxon>Bacillota</taxon>
        <taxon>Bacilli</taxon>
        <taxon>Bacillales</taxon>
        <taxon>Bacillaceae</taxon>
        <taxon>Bacillus</taxon>
    </lineage>
</organism>